<keyword id="KW-0997">Cell inner membrane</keyword>
<keyword id="KW-1003">Cell membrane</keyword>
<keyword id="KW-0903">Direct protein sequencing</keyword>
<keyword id="KW-0472">Membrane</keyword>
<keyword id="KW-0520">NAD</keyword>
<keyword id="KW-0874">Quinone</keyword>
<keyword id="KW-1278">Translocase</keyword>
<keyword id="KW-0813">Transport</keyword>
<keyword id="KW-0830">Ubiquinone</keyword>
<name>NQO4_PARDE</name>
<comment type="function">
    <text>NDH-1 shuttles electrons from NADH, via FMN and iron-sulfur (Fe-S) centers, to quinones in the respiratory chain. The immediate electron acceptor for the enzyme in this species is believed to be ubiquinone. Couples the redox reaction to proton translocation (for every two electrons transferred, four hydrogen ions are translocated across the cytoplasmic membrane), and thus conserves the redox energy in a proton gradient.</text>
</comment>
<comment type="catalytic activity">
    <reaction>
        <text>a quinone + NADH + 5 H(+)(in) = a quinol + NAD(+) + 4 H(+)(out)</text>
        <dbReference type="Rhea" id="RHEA:57888"/>
        <dbReference type="ChEBI" id="CHEBI:15378"/>
        <dbReference type="ChEBI" id="CHEBI:24646"/>
        <dbReference type="ChEBI" id="CHEBI:57540"/>
        <dbReference type="ChEBI" id="CHEBI:57945"/>
        <dbReference type="ChEBI" id="CHEBI:132124"/>
    </reaction>
</comment>
<comment type="subunit">
    <text>NDH-1 is composed of at least 14 different subunits, Nqo1 to Nqo14. The complex has a L-shaped structure, with the hydrophobic arm (subunits Nqo7, Nqo8, Nqo10 to Nqo14) embedded in the inner membrane and the hydrophilic peripheral arm (subunits Nqo1 to Nqo6, Nqo9) protruding into the bacterial cytoplasm. The hydrophilic domain contains all the redox centers.</text>
</comment>
<comment type="subcellular location">
    <subcellularLocation>
        <location>Cell inner membrane</location>
        <topology>Peripheral membrane protein</topology>
    </subcellularLocation>
</comment>
<comment type="similarity">
    <text evidence="1">Belongs to the complex I 49 kDa subunit family.</text>
</comment>
<proteinExistence type="evidence at protein level"/>
<organism>
    <name type="scientific">Paracoccus denitrificans</name>
    <dbReference type="NCBI Taxonomy" id="266"/>
    <lineage>
        <taxon>Bacteria</taxon>
        <taxon>Pseudomonadati</taxon>
        <taxon>Pseudomonadota</taxon>
        <taxon>Alphaproteobacteria</taxon>
        <taxon>Rhodobacterales</taxon>
        <taxon>Paracoccaceae</taxon>
        <taxon>Paracoccus</taxon>
    </lineage>
</organism>
<feature type="chain" id="PRO_0000118616" description="NADH-quinone oxidoreductase subunit 4">
    <location>
        <begin position="1"/>
        <end position="412"/>
    </location>
</feature>
<dbReference type="EC" id="7.1.1.-"/>
<dbReference type="EMBL" id="M93015">
    <property type="protein sequence ID" value="AAA03038.1"/>
    <property type="molecule type" value="Unassigned_DNA"/>
</dbReference>
<dbReference type="PIR" id="F42573">
    <property type="entry name" value="F42573"/>
</dbReference>
<dbReference type="SMR" id="P29916"/>
<dbReference type="TCDB" id="3.D.1.2.1">
    <property type="family name" value="the h+ or na+-translocating nadh dehydrogenase (ndh) family"/>
</dbReference>
<dbReference type="GO" id="GO:0005886">
    <property type="term" value="C:plasma membrane"/>
    <property type="evidence" value="ECO:0007669"/>
    <property type="project" value="UniProtKB-SubCell"/>
</dbReference>
<dbReference type="GO" id="GO:0051287">
    <property type="term" value="F:NAD binding"/>
    <property type="evidence" value="ECO:0007669"/>
    <property type="project" value="InterPro"/>
</dbReference>
<dbReference type="GO" id="GO:0050136">
    <property type="term" value="F:NADH:ubiquinone reductase (non-electrogenic) activity"/>
    <property type="evidence" value="ECO:0007669"/>
    <property type="project" value="UniProtKB-UniRule"/>
</dbReference>
<dbReference type="GO" id="GO:0048038">
    <property type="term" value="F:quinone binding"/>
    <property type="evidence" value="ECO:0007669"/>
    <property type="project" value="UniProtKB-KW"/>
</dbReference>
<dbReference type="FunFam" id="1.10.645.10:FF:000005">
    <property type="entry name" value="NADH-quinone oxidoreductase subunit D"/>
    <property type="match status" value="1"/>
</dbReference>
<dbReference type="Gene3D" id="1.10.645.10">
    <property type="entry name" value="Cytochrome-c3 Hydrogenase, chain B"/>
    <property type="match status" value="1"/>
</dbReference>
<dbReference type="HAMAP" id="MF_01358">
    <property type="entry name" value="NDH1_NuoD"/>
    <property type="match status" value="1"/>
</dbReference>
<dbReference type="InterPro" id="IPR001135">
    <property type="entry name" value="NADH_Q_OxRdtase_suD"/>
</dbReference>
<dbReference type="InterPro" id="IPR014029">
    <property type="entry name" value="NADH_UbQ_OxRdtase_49kDa_CS"/>
</dbReference>
<dbReference type="InterPro" id="IPR022885">
    <property type="entry name" value="NDH1_su_D/H"/>
</dbReference>
<dbReference type="InterPro" id="IPR029014">
    <property type="entry name" value="NiFe-Hase_large"/>
</dbReference>
<dbReference type="NCBIfam" id="TIGR01962">
    <property type="entry name" value="NuoD"/>
    <property type="match status" value="1"/>
</dbReference>
<dbReference type="NCBIfam" id="NF004739">
    <property type="entry name" value="PRK06075.1"/>
    <property type="match status" value="1"/>
</dbReference>
<dbReference type="PANTHER" id="PTHR11993:SF10">
    <property type="entry name" value="NADH DEHYDROGENASE [UBIQUINONE] IRON-SULFUR PROTEIN 2, MITOCHONDRIAL"/>
    <property type="match status" value="1"/>
</dbReference>
<dbReference type="PANTHER" id="PTHR11993">
    <property type="entry name" value="NADH-UBIQUINONE OXIDOREDUCTASE 49 KDA SUBUNIT"/>
    <property type="match status" value="1"/>
</dbReference>
<dbReference type="Pfam" id="PF00346">
    <property type="entry name" value="Complex1_49kDa"/>
    <property type="match status" value="1"/>
</dbReference>
<dbReference type="SUPFAM" id="SSF56762">
    <property type="entry name" value="HydB/Nqo4-like"/>
    <property type="match status" value="1"/>
</dbReference>
<dbReference type="PROSITE" id="PS00535">
    <property type="entry name" value="COMPLEX1_49K"/>
    <property type="match status" value="1"/>
</dbReference>
<evidence type="ECO:0000305" key="1"/>
<reference key="1">
    <citation type="journal article" date="1992" name="Biochemistry">
        <title>Gene cluster of the energy-transducing NADH-quinone oxidoreductase of Paracoccus denitrificans: characterization of four structural gene products.</title>
        <authorList>
            <person name="Xu X."/>
            <person name="Matsuno-Yagi A."/>
            <person name="Yagi T."/>
        </authorList>
    </citation>
    <scope>NUCLEOTIDE SEQUENCE [GENOMIC DNA]</scope>
    <scope>PROTEIN SEQUENCE OF 1-15</scope>
    <source>
        <strain>ATCC 13543 / NRRL B-3784 / NRC 449</strain>
    </source>
</reference>
<accession>P29916</accession>
<gene>
    <name type="primary">nqo4</name>
</gene>
<sequence length="412" mass="46674">MDGDIRKNSLDDGSMDALTGEQSIRNFNINFGPQHPAAHGLLRMVLELDGEIVERADPHIGLLHRGTEKLMESRTYLQNLPYLDRLDYVAPMNQEHAWCLAIERLTGTVIPRRASLIRVLYSEIGRILNHLMGVTTGAMDVGALTPPLWGFEAREELMIFYERACGARLHAAYFRPGGVHQDLPPDLLDDIEEWCERFPKLVDDLDTLLTENRIFKQRLVDIGIVTEADALDWGYTGVMVRGSGLAWDLRRSQPYECYDEFDFQIPVGRNGDCYDRYLCRMAEMRESCKIMQQAVQKLRAEPAGDVLARGKLTPPRRAEMKRDMESLIHHFKLYTEGFKVPAGEVYAAVEGPKGEFGVYLVADGTNKPWRAKLRAPGFAHLQSIDWMSRGHMLADVPAIIATLDIVFGEVDR</sequence>
<protein>
    <recommendedName>
        <fullName>NADH-quinone oxidoreductase subunit 4</fullName>
        <ecNumber>7.1.1.-</ecNumber>
    </recommendedName>
    <alternativeName>
        <fullName>NADH dehydrogenase I, subunit 4</fullName>
    </alternativeName>
    <alternativeName>
        <fullName>NDH-1, subunit 4</fullName>
    </alternativeName>
</protein>